<accession>A5IYF5</accession>
<sequence length="208" mass="23553">MLKVLDHPLIKIKLTNMRNRESGHSVFRQNLNEIGSLMVYEILRDYQTKRKEIITSINKKYLGYEFDKDVVFVPILRAGLGMIDGLLKLIPEAKVGHIGMSRDETTFKPTEYFYKIPEVPKDSYIFVVDPMLATGNSAVDAITRLRKDGFNNISLVCLVGVKEGVDNVEKHFGHDINIYLAALDECLNKDKYIEPGLGDAGDRIFGTK</sequence>
<reference key="1">
    <citation type="journal article" date="2007" name="PLoS Genet.">
        <title>Being pathogenic, plastic, and sexual while living with a nearly minimal bacterial genome.</title>
        <authorList>
            <person name="Sirand-Pugnet P."/>
            <person name="Lartigue C."/>
            <person name="Marenda M."/>
            <person name="Jacob D."/>
            <person name="Barre A."/>
            <person name="Barbe V."/>
            <person name="Schenowitz C."/>
            <person name="Mangenot S."/>
            <person name="Couloux A."/>
            <person name="Segurens B."/>
            <person name="de Daruvar A."/>
            <person name="Blanchard A."/>
            <person name="Citti C."/>
        </authorList>
    </citation>
    <scope>NUCLEOTIDE SEQUENCE [LARGE SCALE GENOMIC DNA]</scope>
    <source>
        <strain>NCTC 10123 / CIP 59.7 / PG2</strain>
    </source>
</reference>
<feature type="chain" id="PRO_1000139143" description="Uracil phosphoribosyltransferase">
    <location>
        <begin position="1"/>
        <end position="208"/>
    </location>
</feature>
<feature type="binding site" evidence="1">
    <location>
        <position position="77"/>
    </location>
    <ligand>
        <name>5-phospho-alpha-D-ribose 1-diphosphate</name>
        <dbReference type="ChEBI" id="CHEBI:58017"/>
    </ligand>
</feature>
<feature type="binding site" evidence="1">
    <location>
        <position position="102"/>
    </location>
    <ligand>
        <name>5-phospho-alpha-D-ribose 1-diphosphate</name>
        <dbReference type="ChEBI" id="CHEBI:58017"/>
    </ligand>
</feature>
<feature type="binding site" evidence="1">
    <location>
        <begin position="129"/>
        <end position="137"/>
    </location>
    <ligand>
        <name>5-phospho-alpha-D-ribose 1-diphosphate</name>
        <dbReference type="ChEBI" id="CHEBI:58017"/>
    </ligand>
</feature>
<feature type="binding site" evidence="1">
    <location>
        <position position="193"/>
    </location>
    <ligand>
        <name>uracil</name>
        <dbReference type="ChEBI" id="CHEBI:17568"/>
    </ligand>
</feature>
<feature type="binding site" evidence="1">
    <location>
        <begin position="198"/>
        <end position="200"/>
    </location>
    <ligand>
        <name>uracil</name>
        <dbReference type="ChEBI" id="CHEBI:17568"/>
    </ligand>
</feature>
<feature type="binding site" evidence="1">
    <location>
        <position position="199"/>
    </location>
    <ligand>
        <name>5-phospho-alpha-D-ribose 1-diphosphate</name>
        <dbReference type="ChEBI" id="CHEBI:58017"/>
    </ligand>
</feature>
<protein>
    <recommendedName>
        <fullName evidence="1">Uracil phosphoribosyltransferase</fullName>
        <ecNumber evidence="1">2.4.2.9</ecNumber>
    </recommendedName>
    <alternativeName>
        <fullName evidence="1">UMP pyrophosphorylase</fullName>
    </alternativeName>
    <alternativeName>
        <fullName evidence="1">UPRTase</fullName>
    </alternativeName>
</protein>
<comment type="function">
    <text evidence="1">Catalyzes the conversion of uracil and 5-phospho-alpha-D-ribose 1-diphosphate (PRPP) to UMP and diphosphate.</text>
</comment>
<comment type="catalytic activity">
    <reaction evidence="1">
        <text>UMP + diphosphate = 5-phospho-alpha-D-ribose 1-diphosphate + uracil</text>
        <dbReference type="Rhea" id="RHEA:13017"/>
        <dbReference type="ChEBI" id="CHEBI:17568"/>
        <dbReference type="ChEBI" id="CHEBI:33019"/>
        <dbReference type="ChEBI" id="CHEBI:57865"/>
        <dbReference type="ChEBI" id="CHEBI:58017"/>
        <dbReference type="EC" id="2.4.2.9"/>
    </reaction>
</comment>
<comment type="cofactor">
    <cofactor evidence="1">
        <name>Mg(2+)</name>
        <dbReference type="ChEBI" id="CHEBI:18420"/>
    </cofactor>
    <text evidence="1">Binds 1 Mg(2+) ion per subunit. The magnesium is bound as Mg-PRPP.</text>
</comment>
<comment type="activity regulation">
    <text evidence="1">Allosterically activated by GTP.</text>
</comment>
<comment type="pathway">
    <text evidence="1">Pyrimidine metabolism; UMP biosynthesis via salvage pathway; UMP from uracil: step 1/1.</text>
</comment>
<comment type="similarity">
    <text evidence="1">Belongs to the UPRTase family.</text>
</comment>
<proteinExistence type="inferred from homology"/>
<name>UPP_MYCAP</name>
<evidence type="ECO:0000255" key="1">
    <source>
        <dbReference type="HAMAP-Rule" id="MF_01218"/>
    </source>
</evidence>
<keyword id="KW-0021">Allosteric enzyme</keyword>
<keyword id="KW-0328">Glycosyltransferase</keyword>
<keyword id="KW-0342">GTP-binding</keyword>
<keyword id="KW-0460">Magnesium</keyword>
<keyword id="KW-0547">Nucleotide-binding</keyword>
<keyword id="KW-1185">Reference proteome</keyword>
<keyword id="KW-0808">Transferase</keyword>
<organism>
    <name type="scientific">Mycoplasmopsis agalactiae (strain NCTC 10123 / CIP 59.7 / PG2)</name>
    <name type="common">Mycoplasma agalactiae</name>
    <dbReference type="NCBI Taxonomy" id="347257"/>
    <lineage>
        <taxon>Bacteria</taxon>
        <taxon>Bacillati</taxon>
        <taxon>Mycoplasmatota</taxon>
        <taxon>Mycoplasmoidales</taxon>
        <taxon>Metamycoplasmataceae</taxon>
        <taxon>Mycoplasmopsis</taxon>
    </lineage>
</organism>
<dbReference type="EC" id="2.4.2.9" evidence="1"/>
<dbReference type="EMBL" id="CU179680">
    <property type="protein sequence ID" value="CAL59064.1"/>
    <property type="molecule type" value="Genomic_DNA"/>
</dbReference>
<dbReference type="RefSeq" id="WP_011949539.1">
    <property type="nucleotide sequence ID" value="NC_009497.1"/>
</dbReference>
<dbReference type="SMR" id="A5IYF5"/>
<dbReference type="STRING" id="347257.MAG3660"/>
<dbReference type="GeneID" id="93358125"/>
<dbReference type="KEGG" id="maa:MAG3660"/>
<dbReference type="HOGENOM" id="CLU_067096_2_2_14"/>
<dbReference type="UniPathway" id="UPA00574">
    <property type="reaction ID" value="UER00636"/>
</dbReference>
<dbReference type="Proteomes" id="UP000007065">
    <property type="component" value="Chromosome"/>
</dbReference>
<dbReference type="GO" id="GO:0005525">
    <property type="term" value="F:GTP binding"/>
    <property type="evidence" value="ECO:0007669"/>
    <property type="project" value="UniProtKB-KW"/>
</dbReference>
<dbReference type="GO" id="GO:0000287">
    <property type="term" value="F:magnesium ion binding"/>
    <property type="evidence" value="ECO:0007669"/>
    <property type="project" value="UniProtKB-UniRule"/>
</dbReference>
<dbReference type="GO" id="GO:0004845">
    <property type="term" value="F:uracil phosphoribosyltransferase activity"/>
    <property type="evidence" value="ECO:0007669"/>
    <property type="project" value="UniProtKB-UniRule"/>
</dbReference>
<dbReference type="GO" id="GO:0044206">
    <property type="term" value="P:UMP salvage"/>
    <property type="evidence" value="ECO:0007669"/>
    <property type="project" value="UniProtKB-UniRule"/>
</dbReference>
<dbReference type="GO" id="GO:0006223">
    <property type="term" value="P:uracil salvage"/>
    <property type="evidence" value="ECO:0007669"/>
    <property type="project" value="InterPro"/>
</dbReference>
<dbReference type="CDD" id="cd06223">
    <property type="entry name" value="PRTases_typeI"/>
    <property type="match status" value="1"/>
</dbReference>
<dbReference type="FunFam" id="3.40.50.2020:FF:000003">
    <property type="entry name" value="Uracil phosphoribosyltransferase"/>
    <property type="match status" value="1"/>
</dbReference>
<dbReference type="Gene3D" id="3.40.50.2020">
    <property type="match status" value="1"/>
</dbReference>
<dbReference type="HAMAP" id="MF_01218_B">
    <property type="entry name" value="Upp_B"/>
    <property type="match status" value="1"/>
</dbReference>
<dbReference type="InterPro" id="IPR000836">
    <property type="entry name" value="PRibTrfase_dom"/>
</dbReference>
<dbReference type="InterPro" id="IPR029057">
    <property type="entry name" value="PRTase-like"/>
</dbReference>
<dbReference type="InterPro" id="IPR034332">
    <property type="entry name" value="Upp_B"/>
</dbReference>
<dbReference type="InterPro" id="IPR050054">
    <property type="entry name" value="UPRTase/APRTase"/>
</dbReference>
<dbReference type="InterPro" id="IPR005765">
    <property type="entry name" value="Ura_phspho_trans"/>
</dbReference>
<dbReference type="NCBIfam" id="NF001097">
    <property type="entry name" value="PRK00129.1"/>
    <property type="match status" value="1"/>
</dbReference>
<dbReference type="NCBIfam" id="TIGR01091">
    <property type="entry name" value="upp"/>
    <property type="match status" value="1"/>
</dbReference>
<dbReference type="PANTHER" id="PTHR32315">
    <property type="entry name" value="ADENINE PHOSPHORIBOSYLTRANSFERASE"/>
    <property type="match status" value="1"/>
</dbReference>
<dbReference type="PANTHER" id="PTHR32315:SF4">
    <property type="entry name" value="URACIL PHOSPHORIBOSYLTRANSFERASE, CHLOROPLASTIC"/>
    <property type="match status" value="1"/>
</dbReference>
<dbReference type="Pfam" id="PF14681">
    <property type="entry name" value="UPRTase"/>
    <property type="match status" value="1"/>
</dbReference>
<dbReference type="SUPFAM" id="SSF53271">
    <property type="entry name" value="PRTase-like"/>
    <property type="match status" value="1"/>
</dbReference>
<gene>
    <name evidence="1" type="primary">upp</name>
    <name type="ordered locus">MAG3660</name>
</gene>